<sequence length="334" mass="37322">MAFNLRNRNFLKLLDFTPKEIHFLLDLSAELKRAKYAGTEQKTLQGKNIALIFEKSSTRTRCAFEVAAFDQGAQVSYIGPSGSQIGHKESMKDTARVLGRMYDGIQYRGFGQEIVEVLGQYAGVPVWNGLTDEFHPTQILADLLTMQEYGRSKQLHEMKFAYLGDARNNMGNSLMVGAAKMGMDIRLVAPKAYWPNDALVATCQEIAKQTGAKITLTEEVQEGVKGCDFLYTDVWVSMGEAADAWDERVALMKPYQVNMDVIKATGNPQVKFMHCLPAFHDDQTKVGQEIAAKYGMQGLEVTEEVFESEYSIVFDEAENRLHTIKAVMVATLGQ</sequence>
<proteinExistence type="inferred from homology"/>
<organism>
    <name type="scientific">Vibrio cholerae serotype O1 (strain M66-2)</name>
    <dbReference type="NCBI Taxonomy" id="579112"/>
    <lineage>
        <taxon>Bacteria</taxon>
        <taxon>Pseudomonadati</taxon>
        <taxon>Pseudomonadota</taxon>
        <taxon>Gammaproteobacteria</taxon>
        <taxon>Vibrionales</taxon>
        <taxon>Vibrionaceae</taxon>
        <taxon>Vibrio</taxon>
    </lineage>
</organism>
<evidence type="ECO:0000250" key="1"/>
<evidence type="ECO:0000255" key="2">
    <source>
        <dbReference type="HAMAP-Rule" id="MF_01109"/>
    </source>
</evidence>
<feature type="chain" id="PRO_1000213573" description="Ornithine carbamoyltransferase">
    <location>
        <begin position="1"/>
        <end position="334"/>
    </location>
</feature>
<feature type="binding site" evidence="2">
    <location>
        <begin position="57"/>
        <end position="60"/>
    </location>
    <ligand>
        <name>carbamoyl phosphate</name>
        <dbReference type="ChEBI" id="CHEBI:58228"/>
    </ligand>
</feature>
<feature type="binding site" evidence="2">
    <location>
        <position position="84"/>
    </location>
    <ligand>
        <name>carbamoyl phosphate</name>
        <dbReference type="ChEBI" id="CHEBI:58228"/>
    </ligand>
</feature>
<feature type="binding site" evidence="2">
    <location>
        <position position="108"/>
    </location>
    <ligand>
        <name>carbamoyl phosphate</name>
        <dbReference type="ChEBI" id="CHEBI:58228"/>
    </ligand>
</feature>
<feature type="binding site" evidence="2">
    <location>
        <begin position="135"/>
        <end position="138"/>
    </location>
    <ligand>
        <name>carbamoyl phosphate</name>
        <dbReference type="ChEBI" id="CHEBI:58228"/>
    </ligand>
</feature>
<feature type="binding site" evidence="2">
    <location>
        <position position="169"/>
    </location>
    <ligand>
        <name>L-ornithine</name>
        <dbReference type="ChEBI" id="CHEBI:46911"/>
    </ligand>
</feature>
<feature type="binding site" evidence="2">
    <location>
        <position position="233"/>
    </location>
    <ligand>
        <name>L-ornithine</name>
        <dbReference type="ChEBI" id="CHEBI:46911"/>
    </ligand>
</feature>
<feature type="binding site" evidence="2">
    <location>
        <begin position="237"/>
        <end position="238"/>
    </location>
    <ligand>
        <name>L-ornithine</name>
        <dbReference type="ChEBI" id="CHEBI:46911"/>
    </ligand>
</feature>
<feature type="binding site" evidence="2">
    <location>
        <begin position="275"/>
        <end position="276"/>
    </location>
    <ligand>
        <name>carbamoyl phosphate</name>
        <dbReference type="ChEBI" id="CHEBI:58228"/>
    </ligand>
</feature>
<feature type="binding site" evidence="2">
    <location>
        <position position="320"/>
    </location>
    <ligand>
        <name>carbamoyl phosphate</name>
        <dbReference type="ChEBI" id="CHEBI:58228"/>
    </ligand>
</feature>
<keyword id="KW-0056">Arginine metabolism</keyword>
<keyword id="KW-0963">Cytoplasm</keyword>
<keyword id="KW-0808">Transferase</keyword>
<protein>
    <recommendedName>
        <fullName evidence="2">Ornithine carbamoyltransferase</fullName>
        <shortName evidence="2">OTCase</shortName>
        <ecNumber evidence="2">2.1.3.3</ecNumber>
    </recommendedName>
</protein>
<gene>
    <name evidence="2" type="primary">arcB</name>
    <name type="ordered locus">VCM66_2430</name>
</gene>
<comment type="function">
    <text evidence="1">Reversibly catalyzes the transfer of the carbamoyl group from carbamoyl phosphate (CP) to the N(epsilon) atom of ornithine (ORN) to produce L-citrulline.</text>
</comment>
<comment type="catalytic activity">
    <reaction evidence="2">
        <text>carbamoyl phosphate + L-ornithine = L-citrulline + phosphate + H(+)</text>
        <dbReference type="Rhea" id="RHEA:19513"/>
        <dbReference type="ChEBI" id="CHEBI:15378"/>
        <dbReference type="ChEBI" id="CHEBI:43474"/>
        <dbReference type="ChEBI" id="CHEBI:46911"/>
        <dbReference type="ChEBI" id="CHEBI:57743"/>
        <dbReference type="ChEBI" id="CHEBI:58228"/>
        <dbReference type="EC" id="2.1.3.3"/>
    </reaction>
</comment>
<comment type="pathway">
    <text evidence="2">Amino-acid degradation; L-arginine degradation via ADI pathway; carbamoyl phosphate from L-arginine: step 2/2.</text>
</comment>
<comment type="subcellular location">
    <subcellularLocation>
        <location evidence="2">Cytoplasm</location>
    </subcellularLocation>
</comment>
<comment type="similarity">
    <text evidence="2">Belongs to the aspartate/ornithine carbamoyltransferase superfamily. OTCase family.</text>
</comment>
<accession>C3LR49</accession>
<dbReference type="EC" id="2.1.3.3" evidence="2"/>
<dbReference type="EMBL" id="CP001233">
    <property type="protein sequence ID" value="ACP06727.1"/>
    <property type="molecule type" value="Genomic_DNA"/>
</dbReference>
<dbReference type="SMR" id="C3LR49"/>
<dbReference type="KEGG" id="vcm:VCM66_2430"/>
<dbReference type="HOGENOM" id="CLU_043846_3_1_6"/>
<dbReference type="UniPathway" id="UPA00254">
    <property type="reaction ID" value="UER00365"/>
</dbReference>
<dbReference type="Proteomes" id="UP000001217">
    <property type="component" value="Chromosome I"/>
</dbReference>
<dbReference type="GO" id="GO:0005737">
    <property type="term" value="C:cytoplasm"/>
    <property type="evidence" value="ECO:0007669"/>
    <property type="project" value="UniProtKB-SubCell"/>
</dbReference>
<dbReference type="GO" id="GO:0016597">
    <property type="term" value="F:amino acid binding"/>
    <property type="evidence" value="ECO:0007669"/>
    <property type="project" value="InterPro"/>
</dbReference>
<dbReference type="GO" id="GO:0004585">
    <property type="term" value="F:ornithine carbamoyltransferase activity"/>
    <property type="evidence" value="ECO:0007669"/>
    <property type="project" value="UniProtKB-UniRule"/>
</dbReference>
<dbReference type="GO" id="GO:0042450">
    <property type="term" value="P:arginine biosynthetic process via ornithine"/>
    <property type="evidence" value="ECO:0007669"/>
    <property type="project" value="TreeGrafter"/>
</dbReference>
<dbReference type="GO" id="GO:0019547">
    <property type="term" value="P:arginine catabolic process to ornithine"/>
    <property type="evidence" value="ECO:0007669"/>
    <property type="project" value="UniProtKB-UniRule"/>
</dbReference>
<dbReference type="GO" id="GO:0019240">
    <property type="term" value="P:citrulline biosynthetic process"/>
    <property type="evidence" value="ECO:0007669"/>
    <property type="project" value="TreeGrafter"/>
</dbReference>
<dbReference type="FunFam" id="3.40.50.1370:FF:000004">
    <property type="entry name" value="Ornithine carbamoyltransferase"/>
    <property type="match status" value="1"/>
</dbReference>
<dbReference type="Gene3D" id="3.40.50.1370">
    <property type="entry name" value="Aspartate/ornithine carbamoyltransferase"/>
    <property type="match status" value="2"/>
</dbReference>
<dbReference type="HAMAP" id="MF_01109">
    <property type="entry name" value="OTCase"/>
    <property type="match status" value="1"/>
</dbReference>
<dbReference type="InterPro" id="IPR006132">
    <property type="entry name" value="Asp/Orn_carbamoyltranf_P-bd"/>
</dbReference>
<dbReference type="InterPro" id="IPR006130">
    <property type="entry name" value="Asp/Orn_carbamoylTrfase"/>
</dbReference>
<dbReference type="InterPro" id="IPR036901">
    <property type="entry name" value="Asp/Orn_carbamoylTrfase_sf"/>
</dbReference>
<dbReference type="InterPro" id="IPR006131">
    <property type="entry name" value="Asp_carbamoyltransf_Asp/Orn-bd"/>
</dbReference>
<dbReference type="InterPro" id="IPR002292">
    <property type="entry name" value="Orn/put_carbamltrans"/>
</dbReference>
<dbReference type="InterPro" id="IPR024904">
    <property type="entry name" value="OTCase_ArgI"/>
</dbReference>
<dbReference type="NCBIfam" id="TIGR00658">
    <property type="entry name" value="orni_carb_tr"/>
    <property type="match status" value="1"/>
</dbReference>
<dbReference type="NCBIfam" id="NF001986">
    <property type="entry name" value="PRK00779.1"/>
    <property type="match status" value="1"/>
</dbReference>
<dbReference type="NCBIfam" id="NF003286">
    <property type="entry name" value="PRK04284.1"/>
    <property type="match status" value="1"/>
</dbReference>
<dbReference type="PANTHER" id="PTHR45753:SF2">
    <property type="entry name" value="ORNITHINE CARBAMOYLTRANSFERASE"/>
    <property type="match status" value="1"/>
</dbReference>
<dbReference type="PANTHER" id="PTHR45753">
    <property type="entry name" value="ORNITHINE CARBAMOYLTRANSFERASE, MITOCHONDRIAL"/>
    <property type="match status" value="1"/>
</dbReference>
<dbReference type="Pfam" id="PF00185">
    <property type="entry name" value="OTCace"/>
    <property type="match status" value="1"/>
</dbReference>
<dbReference type="Pfam" id="PF02729">
    <property type="entry name" value="OTCace_N"/>
    <property type="match status" value="1"/>
</dbReference>
<dbReference type="PRINTS" id="PR00100">
    <property type="entry name" value="AOTCASE"/>
</dbReference>
<dbReference type="PRINTS" id="PR00102">
    <property type="entry name" value="OTCASE"/>
</dbReference>
<dbReference type="SUPFAM" id="SSF53671">
    <property type="entry name" value="Aspartate/ornithine carbamoyltransferase"/>
    <property type="match status" value="1"/>
</dbReference>
<dbReference type="PROSITE" id="PS00097">
    <property type="entry name" value="CARBAMOYLTRANSFERASE"/>
    <property type="match status" value="1"/>
</dbReference>
<reference key="1">
    <citation type="journal article" date="2008" name="PLoS ONE">
        <title>A recalibrated molecular clock and independent origins for the cholera pandemic clones.</title>
        <authorList>
            <person name="Feng L."/>
            <person name="Reeves P.R."/>
            <person name="Lan R."/>
            <person name="Ren Y."/>
            <person name="Gao C."/>
            <person name="Zhou Z."/>
            <person name="Ren Y."/>
            <person name="Cheng J."/>
            <person name="Wang W."/>
            <person name="Wang J."/>
            <person name="Qian W."/>
            <person name="Li D."/>
            <person name="Wang L."/>
        </authorList>
    </citation>
    <scope>NUCLEOTIDE SEQUENCE [LARGE SCALE GENOMIC DNA]</scope>
    <source>
        <strain>M66-2</strain>
    </source>
</reference>
<name>OTC_VIBCM</name>